<keyword id="KW-0067">ATP-binding</keyword>
<keyword id="KW-0436">Ligase</keyword>
<keyword id="KW-0496">Mitochondrion</keyword>
<keyword id="KW-0547">Nucleotide-binding</keyword>
<keyword id="KW-0648">Protein biosynthesis</keyword>
<keyword id="KW-1185">Reference proteome</keyword>
<keyword id="KW-0809">Transit peptide</keyword>
<accession>E3WSB5</accession>
<accession>W5JVW3</accession>
<feature type="transit peptide" description="Mitochondrion" evidence="1">
    <location>
        <begin position="1"/>
        <end position="44"/>
    </location>
</feature>
<feature type="chain" id="PRO_0000413296" description="Glutamyl-tRNA(Gln) amidotransferase subunit C, mitochondrial">
    <location>
        <begin position="45"/>
        <end position="166"/>
    </location>
</feature>
<reference key="1">
    <citation type="journal article" date="2010" name="BMC Genomics">
        <title>Combination of measures distinguishes pre-miRNAs from other stem-loops in the genome of the newly sequenced Anopheles darlingi.</title>
        <authorList>
            <person name="Mendes N.D."/>
            <person name="Freitas A.T."/>
            <person name="Vasconcelos A.T."/>
            <person name="Sagot M.F."/>
        </authorList>
    </citation>
    <scope>NUCLEOTIDE SEQUENCE [LARGE SCALE GENOMIC DNA]</scope>
</reference>
<dbReference type="EC" id="6.3.5.-" evidence="1"/>
<dbReference type="EMBL" id="ADMH02000150">
    <property type="protein sequence ID" value="ETN67598.1"/>
    <property type="molecule type" value="Genomic_DNA"/>
</dbReference>
<dbReference type="SMR" id="E3WSB5"/>
<dbReference type="FunCoup" id="E3WSB5">
    <property type="interactions" value="989"/>
</dbReference>
<dbReference type="STRING" id="43151.E3WSB5"/>
<dbReference type="EnsemblMetazoa" id="ADAC000588-RA">
    <property type="protein sequence ID" value="ADAC000588-PA"/>
    <property type="gene ID" value="ADAC000588"/>
</dbReference>
<dbReference type="VEuPathDB" id="VectorBase:ADAC000588"/>
<dbReference type="VEuPathDB" id="VectorBase:ADAR2_001968"/>
<dbReference type="eggNOG" id="KOG4247">
    <property type="taxonomic scope" value="Eukaryota"/>
</dbReference>
<dbReference type="InParanoid" id="E3WSB5"/>
<dbReference type="OMA" id="GTANRNW"/>
<dbReference type="OrthoDB" id="5394539at2759"/>
<dbReference type="Proteomes" id="UP000000673">
    <property type="component" value="Unassembled WGS sequence"/>
</dbReference>
<dbReference type="GO" id="GO:0030956">
    <property type="term" value="C:glutamyl-tRNA(Gln) amidotransferase complex"/>
    <property type="evidence" value="ECO:0007669"/>
    <property type="project" value="UniProtKB-UniRule"/>
</dbReference>
<dbReference type="GO" id="GO:0005739">
    <property type="term" value="C:mitochondrion"/>
    <property type="evidence" value="ECO:0007669"/>
    <property type="project" value="UniProtKB-SubCell"/>
</dbReference>
<dbReference type="GO" id="GO:0005524">
    <property type="term" value="F:ATP binding"/>
    <property type="evidence" value="ECO:0007669"/>
    <property type="project" value="UniProtKB-KW"/>
</dbReference>
<dbReference type="GO" id="GO:0050567">
    <property type="term" value="F:glutaminyl-tRNA synthase (glutamine-hydrolyzing) activity"/>
    <property type="evidence" value="ECO:0007669"/>
    <property type="project" value="UniProtKB-UniRule"/>
</dbReference>
<dbReference type="GO" id="GO:0070681">
    <property type="term" value="P:glutaminyl-tRNAGln biosynthesis via transamidation"/>
    <property type="evidence" value="ECO:0007669"/>
    <property type="project" value="UniProtKB-UniRule"/>
</dbReference>
<dbReference type="GO" id="GO:0032543">
    <property type="term" value="P:mitochondrial translation"/>
    <property type="evidence" value="ECO:0007669"/>
    <property type="project" value="UniProtKB-UniRule"/>
</dbReference>
<dbReference type="GO" id="GO:0006450">
    <property type="term" value="P:regulation of translational fidelity"/>
    <property type="evidence" value="ECO:0007669"/>
    <property type="project" value="InterPro"/>
</dbReference>
<dbReference type="HAMAP" id="MF_00122">
    <property type="entry name" value="GatC"/>
    <property type="match status" value="1"/>
</dbReference>
<dbReference type="InterPro" id="IPR036113">
    <property type="entry name" value="Asp/Glu-ADT_sf_sub_c"/>
</dbReference>
<dbReference type="InterPro" id="IPR003837">
    <property type="entry name" value="GatC"/>
</dbReference>
<dbReference type="PANTHER" id="PTHR15004">
    <property type="entry name" value="GLUTAMYL-TRNA(GLN) AMIDOTRANSFERASE SUBUNIT C, MITOCHONDRIAL"/>
    <property type="match status" value="1"/>
</dbReference>
<dbReference type="PANTHER" id="PTHR15004:SF0">
    <property type="entry name" value="GLUTAMYL-TRNA(GLN) AMIDOTRANSFERASE SUBUNIT C, MITOCHONDRIAL"/>
    <property type="match status" value="1"/>
</dbReference>
<dbReference type="Pfam" id="PF02686">
    <property type="entry name" value="GatC"/>
    <property type="match status" value="1"/>
</dbReference>
<dbReference type="SUPFAM" id="SSF141000">
    <property type="entry name" value="Glu-tRNAGln amidotransferase C subunit"/>
    <property type="match status" value="1"/>
</dbReference>
<sequence>MIRGWTIFTLCKPSALVGSSHFNKQFNWAKSQLQFATKVPQQPYAKTESILPTLQEPDTKPAIDRHTVQLLERLSLVDLETNDALETLEDSIGFASRILTIGTEGVEPLYTVLERERLSLREDVVNDGDLQTDVLRNAAVTEEEYFVAPPGNIPLELQENSRPIAH</sequence>
<organism>
    <name type="scientific">Anopheles darlingi</name>
    <name type="common">Mosquito</name>
    <dbReference type="NCBI Taxonomy" id="43151"/>
    <lineage>
        <taxon>Eukaryota</taxon>
        <taxon>Metazoa</taxon>
        <taxon>Ecdysozoa</taxon>
        <taxon>Arthropoda</taxon>
        <taxon>Hexapoda</taxon>
        <taxon>Insecta</taxon>
        <taxon>Pterygota</taxon>
        <taxon>Neoptera</taxon>
        <taxon>Endopterygota</taxon>
        <taxon>Diptera</taxon>
        <taxon>Nematocera</taxon>
        <taxon>Culicoidea</taxon>
        <taxon>Culicidae</taxon>
        <taxon>Anophelinae</taxon>
        <taxon>Anopheles</taxon>
    </lineage>
</organism>
<name>GATC_ANODA</name>
<evidence type="ECO:0000255" key="1">
    <source>
        <dbReference type="HAMAP-Rule" id="MF_03149"/>
    </source>
</evidence>
<evidence type="ECO:0000312" key="2">
    <source>
        <dbReference type="EMBL" id="ETN67598.1"/>
    </source>
</evidence>
<comment type="function">
    <text evidence="1">Allows the formation of correctly charged Gln-tRNA(Gln) through the transamidation of misacylated Glu-tRNA(Gln) in the mitochondria. The reaction takes place in the presence of glutamine and ATP through an activated gamma-phospho-Glu-tRNA(Gln).</text>
</comment>
<comment type="catalytic activity">
    <reaction evidence="1">
        <text>L-glutamyl-tRNA(Gln) + L-glutamine + ATP + H2O = L-glutaminyl-tRNA(Gln) + L-glutamate + ADP + phosphate + H(+)</text>
        <dbReference type="Rhea" id="RHEA:17521"/>
        <dbReference type="Rhea" id="RHEA-COMP:9681"/>
        <dbReference type="Rhea" id="RHEA-COMP:9684"/>
        <dbReference type="ChEBI" id="CHEBI:15377"/>
        <dbReference type="ChEBI" id="CHEBI:15378"/>
        <dbReference type="ChEBI" id="CHEBI:29985"/>
        <dbReference type="ChEBI" id="CHEBI:30616"/>
        <dbReference type="ChEBI" id="CHEBI:43474"/>
        <dbReference type="ChEBI" id="CHEBI:58359"/>
        <dbReference type="ChEBI" id="CHEBI:78520"/>
        <dbReference type="ChEBI" id="CHEBI:78521"/>
        <dbReference type="ChEBI" id="CHEBI:456216"/>
    </reaction>
</comment>
<comment type="subunit">
    <text evidence="1">Subunit of the heterotrimeric GatCAB amidotransferase (AdT) complex, composed of A, B and C subunits.</text>
</comment>
<comment type="subcellular location">
    <subcellularLocation>
        <location evidence="1">Mitochondrion</location>
    </subcellularLocation>
</comment>
<comment type="similarity">
    <text evidence="1">Belongs to the GatC family.</text>
</comment>
<proteinExistence type="inferred from homology"/>
<protein>
    <recommendedName>
        <fullName evidence="1">Glutamyl-tRNA(Gln) amidotransferase subunit C, mitochondrial</fullName>
        <shortName evidence="1">Glu-AdT subunit C</shortName>
        <ecNumber evidence="1">6.3.5.-</ecNumber>
    </recommendedName>
</protein>
<gene>
    <name evidence="2" type="ORF">AND_000588</name>
</gene>